<gene>
    <name evidence="1" type="primary">murE</name>
    <name type="ordered locus">GK1115</name>
</gene>
<accession>Q5L0Y0</accession>
<proteinExistence type="inferred from homology"/>
<feature type="chain" id="PRO_1000012352" description="UDP-N-acetylmuramoyl-L-alanyl-D-glutamate--2,6-diaminopimelate ligase">
    <location>
        <begin position="1"/>
        <end position="489"/>
    </location>
</feature>
<feature type="short sequence motif" description="Meso-diaminopimelate recognition motif">
    <location>
        <begin position="407"/>
        <end position="410"/>
    </location>
</feature>
<feature type="binding site" evidence="1">
    <location>
        <position position="30"/>
    </location>
    <ligand>
        <name>UDP-N-acetyl-alpha-D-muramoyl-L-alanyl-D-glutamate</name>
        <dbReference type="ChEBI" id="CHEBI:83900"/>
    </ligand>
</feature>
<feature type="binding site" evidence="1">
    <location>
        <begin position="108"/>
        <end position="114"/>
    </location>
    <ligand>
        <name>ATP</name>
        <dbReference type="ChEBI" id="CHEBI:30616"/>
    </ligand>
</feature>
<feature type="binding site" evidence="1">
    <location>
        <position position="149"/>
    </location>
    <ligand>
        <name>UDP-N-acetyl-alpha-D-muramoyl-L-alanyl-D-glutamate</name>
        <dbReference type="ChEBI" id="CHEBI:83900"/>
    </ligand>
</feature>
<feature type="binding site" evidence="1">
    <location>
        <begin position="150"/>
        <end position="151"/>
    </location>
    <ligand>
        <name>UDP-N-acetyl-alpha-D-muramoyl-L-alanyl-D-glutamate</name>
        <dbReference type="ChEBI" id="CHEBI:83900"/>
    </ligand>
</feature>
<feature type="binding site" evidence="1">
    <location>
        <position position="177"/>
    </location>
    <ligand>
        <name>UDP-N-acetyl-alpha-D-muramoyl-L-alanyl-D-glutamate</name>
        <dbReference type="ChEBI" id="CHEBI:83900"/>
    </ligand>
</feature>
<feature type="binding site" evidence="1">
    <location>
        <position position="183"/>
    </location>
    <ligand>
        <name>UDP-N-acetyl-alpha-D-muramoyl-L-alanyl-D-glutamate</name>
        <dbReference type="ChEBI" id="CHEBI:83900"/>
    </ligand>
</feature>
<feature type="binding site" evidence="1">
    <location>
        <position position="185"/>
    </location>
    <ligand>
        <name>UDP-N-acetyl-alpha-D-muramoyl-L-alanyl-D-glutamate</name>
        <dbReference type="ChEBI" id="CHEBI:83900"/>
    </ligand>
</feature>
<feature type="binding site" evidence="1">
    <location>
        <position position="383"/>
    </location>
    <ligand>
        <name>meso-2,6-diaminopimelate</name>
        <dbReference type="ChEBI" id="CHEBI:57791"/>
    </ligand>
</feature>
<feature type="binding site" evidence="1">
    <location>
        <begin position="407"/>
        <end position="410"/>
    </location>
    <ligand>
        <name>meso-2,6-diaminopimelate</name>
        <dbReference type="ChEBI" id="CHEBI:57791"/>
    </ligand>
</feature>
<feature type="binding site" evidence="1">
    <location>
        <position position="459"/>
    </location>
    <ligand>
        <name>meso-2,6-diaminopimelate</name>
        <dbReference type="ChEBI" id="CHEBI:57791"/>
    </ligand>
</feature>
<feature type="binding site" evidence="1">
    <location>
        <position position="463"/>
    </location>
    <ligand>
        <name>meso-2,6-diaminopimelate</name>
        <dbReference type="ChEBI" id="CHEBI:57791"/>
    </ligand>
</feature>
<feature type="modified residue" description="N6-carboxylysine" evidence="1">
    <location>
        <position position="217"/>
    </location>
</feature>
<keyword id="KW-0067">ATP-binding</keyword>
<keyword id="KW-0131">Cell cycle</keyword>
<keyword id="KW-0132">Cell division</keyword>
<keyword id="KW-0133">Cell shape</keyword>
<keyword id="KW-0961">Cell wall biogenesis/degradation</keyword>
<keyword id="KW-0963">Cytoplasm</keyword>
<keyword id="KW-0436">Ligase</keyword>
<keyword id="KW-0460">Magnesium</keyword>
<keyword id="KW-0547">Nucleotide-binding</keyword>
<keyword id="KW-0573">Peptidoglycan synthesis</keyword>
<keyword id="KW-1185">Reference proteome</keyword>
<dbReference type="EC" id="6.3.2.13" evidence="1"/>
<dbReference type="EMBL" id="BA000043">
    <property type="protein sequence ID" value="BAD75400.1"/>
    <property type="molecule type" value="Genomic_DNA"/>
</dbReference>
<dbReference type="RefSeq" id="WP_011230615.1">
    <property type="nucleotide sequence ID" value="NC_006510.1"/>
</dbReference>
<dbReference type="SMR" id="Q5L0Y0"/>
<dbReference type="STRING" id="235909.GK1115"/>
<dbReference type="KEGG" id="gka:GK1115"/>
<dbReference type="PATRIC" id="fig|235909.7.peg.1215"/>
<dbReference type="eggNOG" id="COG0769">
    <property type="taxonomic scope" value="Bacteria"/>
</dbReference>
<dbReference type="HOGENOM" id="CLU_022291_4_1_9"/>
<dbReference type="UniPathway" id="UPA00219"/>
<dbReference type="Proteomes" id="UP000001172">
    <property type="component" value="Chromosome"/>
</dbReference>
<dbReference type="GO" id="GO:0005737">
    <property type="term" value="C:cytoplasm"/>
    <property type="evidence" value="ECO:0007669"/>
    <property type="project" value="UniProtKB-SubCell"/>
</dbReference>
<dbReference type="GO" id="GO:0005524">
    <property type="term" value="F:ATP binding"/>
    <property type="evidence" value="ECO:0007669"/>
    <property type="project" value="UniProtKB-UniRule"/>
</dbReference>
<dbReference type="GO" id="GO:0000287">
    <property type="term" value="F:magnesium ion binding"/>
    <property type="evidence" value="ECO:0007669"/>
    <property type="project" value="UniProtKB-UniRule"/>
</dbReference>
<dbReference type="GO" id="GO:0008765">
    <property type="term" value="F:UDP-N-acetylmuramoylalanyl-D-glutamate-2,6-diaminopimelate ligase activity"/>
    <property type="evidence" value="ECO:0007669"/>
    <property type="project" value="UniProtKB-UniRule"/>
</dbReference>
<dbReference type="GO" id="GO:0051301">
    <property type="term" value="P:cell division"/>
    <property type="evidence" value="ECO:0007669"/>
    <property type="project" value="UniProtKB-KW"/>
</dbReference>
<dbReference type="GO" id="GO:0071555">
    <property type="term" value="P:cell wall organization"/>
    <property type="evidence" value="ECO:0007669"/>
    <property type="project" value="UniProtKB-KW"/>
</dbReference>
<dbReference type="GO" id="GO:0009252">
    <property type="term" value="P:peptidoglycan biosynthetic process"/>
    <property type="evidence" value="ECO:0007669"/>
    <property type="project" value="UniProtKB-UniRule"/>
</dbReference>
<dbReference type="GO" id="GO:0008360">
    <property type="term" value="P:regulation of cell shape"/>
    <property type="evidence" value="ECO:0007669"/>
    <property type="project" value="UniProtKB-KW"/>
</dbReference>
<dbReference type="FunFam" id="3.40.1390.10:FF:000005">
    <property type="entry name" value="UDP-N-acetylmuramoyl-L-alanyl-D-glutamate--2,6-diaminopimelate ligase"/>
    <property type="match status" value="1"/>
</dbReference>
<dbReference type="FunFam" id="3.90.190.20:FF:000006">
    <property type="entry name" value="UDP-N-acetylmuramoyl-L-alanyl-D-glutamate--2,6-diaminopimelate ligase"/>
    <property type="match status" value="1"/>
</dbReference>
<dbReference type="Gene3D" id="3.90.190.20">
    <property type="entry name" value="Mur ligase, C-terminal domain"/>
    <property type="match status" value="1"/>
</dbReference>
<dbReference type="Gene3D" id="3.40.1190.10">
    <property type="entry name" value="Mur-like, catalytic domain"/>
    <property type="match status" value="1"/>
</dbReference>
<dbReference type="Gene3D" id="3.40.1390.10">
    <property type="entry name" value="MurE/MurF, N-terminal domain"/>
    <property type="match status" value="1"/>
</dbReference>
<dbReference type="HAMAP" id="MF_00208">
    <property type="entry name" value="MurE"/>
    <property type="match status" value="1"/>
</dbReference>
<dbReference type="InterPro" id="IPR036565">
    <property type="entry name" value="Mur-like_cat_sf"/>
</dbReference>
<dbReference type="InterPro" id="IPR004101">
    <property type="entry name" value="Mur_ligase_C"/>
</dbReference>
<dbReference type="InterPro" id="IPR036615">
    <property type="entry name" value="Mur_ligase_C_dom_sf"/>
</dbReference>
<dbReference type="InterPro" id="IPR013221">
    <property type="entry name" value="Mur_ligase_cen"/>
</dbReference>
<dbReference type="InterPro" id="IPR000713">
    <property type="entry name" value="Mur_ligase_N"/>
</dbReference>
<dbReference type="InterPro" id="IPR035911">
    <property type="entry name" value="MurE/MurF_N"/>
</dbReference>
<dbReference type="InterPro" id="IPR005761">
    <property type="entry name" value="UDP-N-AcMur-Glu-dNH2Pim_ligase"/>
</dbReference>
<dbReference type="NCBIfam" id="TIGR01085">
    <property type="entry name" value="murE"/>
    <property type="match status" value="1"/>
</dbReference>
<dbReference type="NCBIfam" id="NF001124">
    <property type="entry name" value="PRK00139.1-2"/>
    <property type="match status" value="1"/>
</dbReference>
<dbReference type="NCBIfam" id="NF001126">
    <property type="entry name" value="PRK00139.1-4"/>
    <property type="match status" value="1"/>
</dbReference>
<dbReference type="PANTHER" id="PTHR23135">
    <property type="entry name" value="MUR LIGASE FAMILY MEMBER"/>
    <property type="match status" value="1"/>
</dbReference>
<dbReference type="PANTHER" id="PTHR23135:SF4">
    <property type="entry name" value="UDP-N-ACETYLMURAMOYL-L-ALANYL-D-GLUTAMATE--2,6-DIAMINOPIMELATE LIGASE MURE HOMOLOG, CHLOROPLASTIC"/>
    <property type="match status" value="1"/>
</dbReference>
<dbReference type="Pfam" id="PF01225">
    <property type="entry name" value="Mur_ligase"/>
    <property type="match status" value="1"/>
</dbReference>
<dbReference type="Pfam" id="PF02875">
    <property type="entry name" value="Mur_ligase_C"/>
    <property type="match status" value="1"/>
</dbReference>
<dbReference type="Pfam" id="PF08245">
    <property type="entry name" value="Mur_ligase_M"/>
    <property type="match status" value="1"/>
</dbReference>
<dbReference type="SUPFAM" id="SSF53623">
    <property type="entry name" value="MurD-like peptide ligases, catalytic domain"/>
    <property type="match status" value="1"/>
</dbReference>
<dbReference type="SUPFAM" id="SSF53244">
    <property type="entry name" value="MurD-like peptide ligases, peptide-binding domain"/>
    <property type="match status" value="1"/>
</dbReference>
<dbReference type="SUPFAM" id="SSF63418">
    <property type="entry name" value="MurE/MurF N-terminal domain"/>
    <property type="match status" value="1"/>
</dbReference>
<reference key="1">
    <citation type="journal article" date="2004" name="Nucleic Acids Res.">
        <title>Thermoadaptation trait revealed by the genome sequence of thermophilic Geobacillus kaustophilus.</title>
        <authorList>
            <person name="Takami H."/>
            <person name="Takaki Y."/>
            <person name="Chee G.-J."/>
            <person name="Nishi S."/>
            <person name="Shimamura S."/>
            <person name="Suzuki H."/>
            <person name="Matsui S."/>
            <person name="Uchiyama I."/>
        </authorList>
    </citation>
    <scope>NUCLEOTIDE SEQUENCE [LARGE SCALE GENOMIC DNA]</scope>
    <source>
        <strain>HTA426</strain>
    </source>
</reference>
<protein>
    <recommendedName>
        <fullName evidence="1">UDP-N-acetylmuramoyl-L-alanyl-D-glutamate--2,6-diaminopimelate ligase</fullName>
        <ecNumber evidence="1">6.3.2.13</ecNumber>
    </recommendedName>
    <alternativeName>
        <fullName evidence="1">Meso-A2pm-adding enzyme</fullName>
    </alternativeName>
    <alternativeName>
        <fullName evidence="1">Meso-diaminopimelate-adding enzyme</fullName>
    </alternativeName>
    <alternativeName>
        <fullName evidence="1">UDP-MurNAc-L-Ala-D-Glu:meso-diaminopimelate ligase</fullName>
    </alternativeName>
    <alternativeName>
        <fullName evidence="1">UDP-MurNAc-tripeptide synthetase</fullName>
    </alternativeName>
    <alternativeName>
        <fullName evidence="1">UDP-N-acetylmuramyl-tripeptide synthetase</fullName>
    </alternativeName>
</protein>
<evidence type="ECO:0000255" key="1">
    <source>
        <dbReference type="HAMAP-Rule" id="MF_00208"/>
    </source>
</evidence>
<name>MURE_GEOKA</name>
<sequence>MKLLTLLSHLPGFWVHHGGNPDIVALEMDSRRVASGSLFFCLKGFTVDGHDFAEEAVARGAAAIVAERPLSVDVPVVLVSDSRRAMAILADAFYGRPTHRLHLIGVTGTNGKTTTTSIIEQIARKTGKKTGLIGTVHIKVGDRSYPAANTTPESLILQRTFKQMVDEGVEFVAMEVSSHALHQGRVHGCDYDVAVFTNLTQDHLDYHGTMEEYRNAKGLLFAQLGNRYDERRPKFAVLNHDDPVSQYYKHMTAAPIVTYGMREKSDVMAEQIRMTAGGMAFRLCTPHGSAAVETKLVGSFNVYNILAAAAACLASGFSLETIAAALADVEPVPGRFETVDEGQNFTIIVDYAHTPDSLENALKTVRQLAKRNVYVVIGCGGDRDPSKRPLMAQVAVRYADVAIFTSDNPRSEDPKQILRDMEAGVSAEIGKHVTIPDREEAIRYAIGQAQEGDVVLIAGKGHETYQIIGNDVIEFDDRAVARAAVKERG</sequence>
<comment type="function">
    <text evidence="1">Catalyzes the addition of meso-diaminopimelic acid to the nucleotide precursor UDP-N-acetylmuramoyl-L-alanyl-D-glutamate (UMAG) in the biosynthesis of bacterial cell-wall peptidoglycan.</text>
</comment>
<comment type="catalytic activity">
    <reaction evidence="1">
        <text>UDP-N-acetyl-alpha-D-muramoyl-L-alanyl-D-glutamate + meso-2,6-diaminopimelate + ATP = UDP-N-acetyl-alpha-D-muramoyl-L-alanyl-gamma-D-glutamyl-meso-2,6-diaminopimelate + ADP + phosphate + H(+)</text>
        <dbReference type="Rhea" id="RHEA:23676"/>
        <dbReference type="ChEBI" id="CHEBI:15378"/>
        <dbReference type="ChEBI" id="CHEBI:30616"/>
        <dbReference type="ChEBI" id="CHEBI:43474"/>
        <dbReference type="ChEBI" id="CHEBI:57791"/>
        <dbReference type="ChEBI" id="CHEBI:83900"/>
        <dbReference type="ChEBI" id="CHEBI:83905"/>
        <dbReference type="ChEBI" id="CHEBI:456216"/>
        <dbReference type="EC" id="6.3.2.13"/>
    </reaction>
</comment>
<comment type="cofactor">
    <cofactor evidence="1">
        <name>Mg(2+)</name>
        <dbReference type="ChEBI" id="CHEBI:18420"/>
    </cofactor>
</comment>
<comment type="pathway">
    <text evidence="1">Cell wall biogenesis; peptidoglycan biosynthesis.</text>
</comment>
<comment type="subcellular location">
    <subcellularLocation>
        <location evidence="1">Cytoplasm</location>
    </subcellularLocation>
</comment>
<comment type="PTM">
    <text evidence="1">Carboxylation is probably crucial for Mg(2+) binding and, consequently, for the gamma-phosphate positioning of ATP.</text>
</comment>
<comment type="similarity">
    <text evidence="1">Belongs to the MurCDEF family. MurE subfamily.</text>
</comment>
<organism>
    <name type="scientific">Geobacillus kaustophilus (strain HTA426)</name>
    <dbReference type="NCBI Taxonomy" id="235909"/>
    <lineage>
        <taxon>Bacteria</taxon>
        <taxon>Bacillati</taxon>
        <taxon>Bacillota</taxon>
        <taxon>Bacilli</taxon>
        <taxon>Bacillales</taxon>
        <taxon>Anoxybacillaceae</taxon>
        <taxon>Geobacillus</taxon>
        <taxon>Geobacillus thermoleovorans group</taxon>
    </lineage>
</organism>